<gene>
    <name type="ordered locus">RP472</name>
</gene>
<comment type="subcellular location">
    <subcellularLocation>
        <location evidence="2">Cell membrane</location>
        <topology evidence="2">Multi-pass membrane protein</topology>
    </subcellularLocation>
</comment>
<name>Y472_RICPR</name>
<feature type="chain" id="PRO_0000101378" description="Uncharacterized protein RP472">
    <location>
        <begin position="1"/>
        <end position="334"/>
    </location>
</feature>
<feature type="transmembrane region" description="Helical" evidence="1">
    <location>
        <begin position="1"/>
        <end position="21"/>
    </location>
</feature>
<feature type="transmembrane region" description="Helical" evidence="1">
    <location>
        <begin position="46"/>
        <end position="66"/>
    </location>
</feature>
<organism>
    <name type="scientific">Rickettsia prowazekii (strain Madrid E)</name>
    <dbReference type="NCBI Taxonomy" id="272947"/>
    <lineage>
        <taxon>Bacteria</taxon>
        <taxon>Pseudomonadati</taxon>
        <taxon>Pseudomonadota</taxon>
        <taxon>Alphaproteobacteria</taxon>
        <taxon>Rickettsiales</taxon>
        <taxon>Rickettsiaceae</taxon>
        <taxon>Rickettsieae</taxon>
        <taxon>Rickettsia</taxon>
        <taxon>typhus group</taxon>
    </lineage>
</organism>
<evidence type="ECO:0000255" key="1"/>
<evidence type="ECO:0000305" key="2"/>
<protein>
    <recommendedName>
        <fullName>Uncharacterized protein RP472</fullName>
    </recommendedName>
</protein>
<proteinExistence type="predicted"/>
<reference key="1">
    <citation type="journal article" date="1998" name="Nature">
        <title>The genome sequence of Rickettsia prowazekii and the origin of mitochondria.</title>
        <authorList>
            <person name="Andersson S.G.E."/>
            <person name="Zomorodipour A."/>
            <person name="Andersson J.O."/>
            <person name="Sicheritz-Ponten T."/>
            <person name="Alsmark U.C.M."/>
            <person name="Podowski R.M."/>
            <person name="Naeslund A.K."/>
            <person name="Eriksson A.-S."/>
            <person name="Winkler H.H."/>
            <person name="Kurland C.G."/>
        </authorList>
    </citation>
    <scope>NUCLEOTIDE SEQUENCE [LARGE SCALE GENOMIC DNA]</scope>
    <source>
        <strain>Madrid E</strain>
    </source>
</reference>
<sequence length="334" mass="39112">MFRLLLICITFLALYFGFTFIKHFDSKVVISLYDYNIETTLFLSVILGLLLLVSCFIIIRFLIIIIDLPATIHIMFSKRKINHDRHAVILAFAEYIIGNKMKAASIARKNLSSEDLKDFQEFHNFILAVTAEDIDSKISYFQKLITSKTFVFYASKNLAKLYYDKSLYDKAENYAIKAYNLNELDSDNLITLMHCYAKLSLWSKFIFITNKLAKFHKHEFVPKITQYYLLIAKQEVENNNTANAIDYLEKAIDLNFYNDELLEFYFNLNDKLSVNQKTKILKEAFRIAPSLRLVQLFKKITSLSDKQIYEELTQVLDTQKDKIFILAIEAYLEL</sequence>
<dbReference type="EMBL" id="AJ235271">
    <property type="protein sequence ID" value="CAA14927.1"/>
    <property type="molecule type" value="Genomic_DNA"/>
</dbReference>
<dbReference type="PIR" id="E71706">
    <property type="entry name" value="E71706"/>
</dbReference>
<dbReference type="RefSeq" id="NP_220851.1">
    <property type="nucleotide sequence ID" value="NC_000963.1"/>
</dbReference>
<dbReference type="RefSeq" id="WP_010886302.1">
    <property type="nucleotide sequence ID" value="NC_000963.1"/>
</dbReference>
<dbReference type="SMR" id="Q9ZD72"/>
<dbReference type="STRING" id="272947.gene:17555552"/>
<dbReference type="EnsemblBacteria" id="CAA14927">
    <property type="protein sequence ID" value="CAA14927"/>
    <property type="gene ID" value="CAA14927"/>
</dbReference>
<dbReference type="KEGG" id="rpr:RP472"/>
<dbReference type="PATRIC" id="fig|272947.5.peg.483"/>
<dbReference type="eggNOG" id="COG3071">
    <property type="taxonomic scope" value="Bacteria"/>
</dbReference>
<dbReference type="HOGENOM" id="CLU_071822_0_0_5"/>
<dbReference type="OrthoDB" id="7161034at2"/>
<dbReference type="Proteomes" id="UP000002480">
    <property type="component" value="Chromosome"/>
</dbReference>
<dbReference type="GO" id="GO:0005886">
    <property type="term" value="C:plasma membrane"/>
    <property type="evidence" value="ECO:0007669"/>
    <property type="project" value="UniProtKB-SubCell"/>
</dbReference>
<dbReference type="Gene3D" id="1.25.40.10">
    <property type="entry name" value="Tetratricopeptide repeat domain"/>
    <property type="match status" value="1"/>
</dbReference>
<dbReference type="InterPro" id="IPR010817">
    <property type="entry name" value="HemY_N"/>
</dbReference>
<dbReference type="InterPro" id="IPR011990">
    <property type="entry name" value="TPR-like_helical_dom_sf"/>
</dbReference>
<dbReference type="Pfam" id="PF07219">
    <property type="entry name" value="HemY_N"/>
    <property type="match status" value="1"/>
</dbReference>
<dbReference type="SUPFAM" id="SSF48452">
    <property type="entry name" value="TPR-like"/>
    <property type="match status" value="1"/>
</dbReference>
<keyword id="KW-1003">Cell membrane</keyword>
<keyword id="KW-0472">Membrane</keyword>
<keyword id="KW-1185">Reference proteome</keyword>
<keyword id="KW-0812">Transmembrane</keyword>
<keyword id="KW-1133">Transmembrane helix</keyword>
<accession>Q9ZD72</accession>